<sequence>MSWLSSSQGVVLTAYHPSGKDQTVGNSHAKAGEEATSSRRYGQYTMNQESTTIKVMEKPPFDRSISQDSLDELSMEDYWIELENIKKSSENSQEDQEVVVVKEPDEGELEEEWLKEAGLSNLFGESAGDPQESIVFLSTLTRTQAAAVQKRVETVSQTLRKKNKQYQIPDVRDIFAQQRESKETAPGGTESQSLRTNENKYQGRDDEASNLVGEEKLIPPEETPAPETDINLEVSFAEQALNQKESSKEKIQKSKGDDATLPSFRLPKDKTGTTRIGDLAPQDMKKVCHLALIELTALYDVLGIELKQQKAVKIKTKDSGLFCVPLTALLEQDQRKVPGMRIPLIFQKLISRIEERGLETEGLLRIPGAAIRIKNLCQELEAKFYEGTFNWESVKQHDAASLLKLFIRELPQPLLSVEYLKAFQAVQNLPTKKQQLQALNLLVILLPDANRDTLKALLEFLQRVIDNKEKNKMTVMNVAMVMAPNLFMCHALGLKSSEQREFVMAAGTANTMHLLIKYQKLLWTIPKFIVNQVRKQNTENHKKDKRAMKKLLKKMAYDREKYEKQDKSTNDADVPQGVIRVQAPHLSKVSMAIQLTEELKASDVLARFLSQESGVAQTLKKGEVFLYEIGGNIGERCLDDDTYMKDLYQLNPNAEWVIKSKPL</sequence>
<keyword id="KW-0025">Alternative splicing</keyword>
<keyword id="KW-0963">Cytoplasm</keyword>
<keyword id="KW-0343">GTPase activation</keyword>
<keyword id="KW-0597">Phosphoprotein</keyword>
<keyword id="KW-1267">Proteomics identification</keyword>
<keyword id="KW-1185">Reference proteome</keyword>
<name>RHG18_HUMAN</name>
<proteinExistence type="evidence at protein level"/>
<protein>
    <recommendedName>
        <fullName>Rho GTPase-activating protein 18</fullName>
    </recommendedName>
    <alternativeName>
        <fullName evidence="11">MacGAP</fullName>
    </alternativeName>
    <alternativeName>
        <fullName>Rho-type GTPase-activating protein 18</fullName>
    </alternativeName>
</protein>
<accession>Q8N392</accession>
<accession>E1P575</accession>
<accession>Q58EZ3</accession>
<accession>Q6P679</accession>
<accession>Q6PJD7</accession>
<accession>Q96S64</accession>
<dbReference type="EMBL" id="AL834511">
    <property type="protein sequence ID" value="CAD39167.2"/>
    <property type="molecule type" value="mRNA"/>
</dbReference>
<dbReference type="EMBL" id="AL450310">
    <property type="status" value="NOT_ANNOTATED_CDS"/>
    <property type="molecule type" value="Genomic_DNA"/>
</dbReference>
<dbReference type="EMBL" id="CH471051">
    <property type="protein sequence ID" value="EAW48076.1"/>
    <property type="molecule type" value="Genomic_DNA"/>
</dbReference>
<dbReference type="EMBL" id="CH471051">
    <property type="protein sequence ID" value="EAW48077.1"/>
    <property type="molecule type" value="Genomic_DNA"/>
</dbReference>
<dbReference type="EMBL" id="BC017223">
    <property type="protein sequence ID" value="AAH17223.1"/>
    <property type="status" value="ALT_SEQ"/>
    <property type="molecule type" value="mRNA"/>
</dbReference>
<dbReference type="EMBL" id="BC039611">
    <property type="protein sequence ID" value="AAH39611.1"/>
    <property type="status" value="ALT_SEQ"/>
    <property type="molecule type" value="mRNA"/>
</dbReference>
<dbReference type="EMBL" id="BC062417">
    <property type="protein sequence ID" value="AAH62417.1"/>
    <property type="status" value="ALT_SEQ"/>
    <property type="molecule type" value="mRNA"/>
</dbReference>
<dbReference type="EMBL" id="BC101708">
    <property type="protein sequence ID" value="AAI01709.1"/>
    <property type="molecule type" value="mRNA"/>
</dbReference>
<dbReference type="EMBL" id="BC107416">
    <property type="protein sequence ID" value="AAI07417.1"/>
    <property type="molecule type" value="mRNA"/>
</dbReference>
<dbReference type="EMBL" id="BC111940">
    <property type="protein sequence ID" value="AAI11941.1"/>
    <property type="molecule type" value="mRNA"/>
</dbReference>
<dbReference type="EMBL" id="AB053293">
    <property type="protein sequence ID" value="BAB61887.1"/>
    <property type="status" value="ALT_INIT"/>
    <property type="molecule type" value="mRNA"/>
</dbReference>
<dbReference type="CCDS" id="CCDS34535.1">
    <molecule id="Q8N392-1"/>
</dbReference>
<dbReference type="PIR" id="G59432">
    <property type="entry name" value="G59432"/>
</dbReference>
<dbReference type="RefSeq" id="NP_277050.2">
    <molecule id="Q8N392-1"/>
    <property type="nucleotide sequence ID" value="NM_033515.2"/>
</dbReference>
<dbReference type="SMR" id="Q8N392"/>
<dbReference type="BioGRID" id="125050">
    <property type="interactions" value="139"/>
</dbReference>
<dbReference type="FunCoup" id="Q8N392">
    <property type="interactions" value="1701"/>
</dbReference>
<dbReference type="IntAct" id="Q8N392">
    <property type="interactions" value="89"/>
</dbReference>
<dbReference type="MINT" id="Q8N392"/>
<dbReference type="STRING" id="9606.ENSP00000357131"/>
<dbReference type="GlyGen" id="Q8N392">
    <property type="glycosylation" value="1 site, 1 O-linked glycan (1 site)"/>
</dbReference>
<dbReference type="iPTMnet" id="Q8N392"/>
<dbReference type="PhosphoSitePlus" id="Q8N392"/>
<dbReference type="SwissPalm" id="Q8N392"/>
<dbReference type="BioMuta" id="ARHGAP18"/>
<dbReference type="DMDM" id="296452981"/>
<dbReference type="jPOST" id="Q8N392"/>
<dbReference type="MassIVE" id="Q8N392"/>
<dbReference type="PaxDb" id="9606-ENSP00000357131"/>
<dbReference type="PeptideAtlas" id="Q8N392"/>
<dbReference type="ProteomicsDB" id="71779">
    <molecule id="Q8N392-1"/>
</dbReference>
<dbReference type="ProteomicsDB" id="71780">
    <molecule id="Q8N392-2"/>
</dbReference>
<dbReference type="Pumba" id="Q8N392"/>
<dbReference type="Antibodypedia" id="46605">
    <property type="antibodies" value="181 antibodies from 30 providers"/>
</dbReference>
<dbReference type="DNASU" id="93663"/>
<dbReference type="Ensembl" id="ENST00000368149.3">
    <molecule id="Q8N392-1"/>
    <property type="protein sequence ID" value="ENSP00000357131.2"/>
    <property type="gene ID" value="ENSG00000146376.11"/>
</dbReference>
<dbReference type="GeneID" id="93663"/>
<dbReference type="KEGG" id="hsa:93663"/>
<dbReference type="MANE-Select" id="ENST00000368149.3">
    <property type="protein sequence ID" value="ENSP00000357131.2"/>
    <property type="RefSeq nucleotide sequence ID" value="NM_033515.3"/>
    <property type="RefSeq protein sequence ID" value="NP_277050.2"/>
</dbReference>
<dbReference type="UCSC" id="uc003qbr.4">
    <molecule id="Q8N392-1"/>
    <property type="organism name" value="human"/>
</dbReference>
<dbReference type="AGR" id="HGNC:21035"/>
<dbReference type="CTD" id="93663"/>
<dbReference type="DisGeNET" id="93663"/>
<dbReference type="GeneCards" id="ARHGAP18"/>
<dbReference type="HGNC" id="HGNC:21035">
    <property type="gene designation" value="ARHGAP18"/>
</dbReference>
<dbReference type="HPA" id="ENSG00000146376">
    <property type="expression patterns" value="Low tissue specificity"/>
</dbReference>
<dbReference type="MIM" id="613351">
    <property type="type" value="gene"/>
</dbReference>
<dbReference type="neXtProt" id="NX_Q8N392"/>
<dbReference type="OpenTargets" id="ENSG00000146376"/>
<dbReference type="PharmGKB" id="PA134884487"/>
<dbReference type="VEuPathDB" id="HostDB:ENSG00000146376"/>
<dbReference type="eggNOG" id="KOG2200">
    <property type="taxonomic scope" value="Eukaryota"/>
</dbReference>
<dbReference type="GeneTree" id="ENSGT00940000157142"/>
<dbReference type="HOGENOM" id="CLU_023268_2_1_1"/>
<dbReference type="InParanoid" id="Q8N392"/>
<dbReference type="OMA" id="QHNMESQ"/>
<dbReference type="OrthoDB" id="27680at2759"/>
<dbReference type="PAN-GO" id="Q8N392">
    <property type="GO annotations" value="4 GO annotations based on evolutionary models"/>
</dbReference>
<dbReference type="PhylomeDB" id="Q8N392"/>
<dbReference type="TreeFam" id="TF314044"/>
<dbReference type="PathwayCommons" id="Q8N392"/>
<dbReference type="Reactome" id="R-HSA-8980692">
    <property type="pathway name" value="RHOA GTPase cycle"/>
</dbReference>
<dbReference type="Reactome" id="R-HSA-9013106">
    <property type="pathway name" value="RHOC GTPase cycle"/>
</dbReference>
<dbReference type="SignaLink" id="Q8N392"/>
<dbReference type="SIGNOR" id="Q8N392"/>
<dbReference type="BioGRID-ORCS" id="93663">
    <property type="hits" value="12 hits in 1153 CRISPR screens"/>
</dbReference>
<dbReference type="ChiTaRS" id="ARHGAP18">
    <property type="organism name" value="human"/>
</dbReference>
<dbReference type="GenomeRNAi" id="93663"/>
<dbReference type="Pharos" id="Q8N392">
    <property type="development level" value="Tbio"/>
</dbReference>
<dbReference type="PRO" id="PR:Q8N392"/>
<dbReference type="Proteomes" id="UP000005640">
    <property type="component" value="Chromosome 6"/>
</dbReference>
<dbReference type="RNAct" id="Q8N392">
    <property type="molecule type" value="protein"/>
</dbReference>
<dbReference type="Bgee" id="ENSG00000146376">
    <property type="expression patterns" value="Expressed in germinal epithelium of ovary and 188 other cell types or tissues"/>
</dbReference>
<dbReference type="GO" id="GO:0005737">
    <property type="term" value="C:cytoplasm"/>
    <property type="evidence" value="ECO:0000315"/>
    <property type="project" value="UniProtKB"/>
</dbReference>
<dbReference type="GO" id="GO:0005881">
    <property type="term" value="C:cytoplasmic microtubule"/>
    <property type="evidence" value="ECO:0000314"/>
    <property type="project" value="CACAO"/>
</dbReference>
<dbReference type="GO" id="GO:0005829">
    <property type="term" value="C:cytosol"/>
    <property type="evidence" value="ECO:0000314"/>
    <property type="project" value="HPA"/>
</dbReference>
<dbReference type="GO" id="GO:0016607">
    <property type="term" value="C:nuclear speck"/>
    <property type="evidence" value="ECO:0000314"/>
    <property type="project" value="HPA"/>
</dbReference>
<dbReference type="GO" id="GO:0005886">
    <property type="term" value="C:plasma membrane"/>
    <property type="evidence" value="ECO:0000314"/>
    <property type="project" value="HPA"/>
</dbReference>
<dbReference type="GO" id="GO:0001726">
    <property type="term" value="C:ruffle"/>
    <property type="evidence" value="ECO:0000314"/>
    <property type="project" value="CACAO"/>
</dbReference>
<dbReference type="GO" id="GO:0045296">
    <property type="term" value="F:cadherin binding"/>
    <property type="evidence" value="ECO:0007005"/>
    <property type="project" value="BHF-UCL"/>
</dbReference>
<dbReference type="GO" id="GO:0005096">
    <property type="term" value="F:GTPase activator activity"/>
    <property type="evidence" value="ECO:0000315"/>
    <property type="project" value="UniProtKB"/>
</dbReference>
<dbReference type="GO" id="GO:0032956">
    <property type="term" value="P:regulation of actin cytoskeleton organization"/>
    <property type="evidence" value="ECO:0000315"/>
    <property type="project" value="UniProtKB"/>
</dbReference>
<dbReference type="GO" id="GO:0030833">
    <property type="term" value="P:regulation of actin filament polymerization"/>
    <property type="evidence" value="ECO:0000315"/>
    <property type="project" value="UniProtKB"/>
</dbReference>
<dbReference type="GO" id="GO:2000145">
    <property type="term" value="P:regulation of cell motility"/>
    <property type="evidence" value="ECO:0000315"/>
    <property type="project" value="UniProtKB"/>
</dbReference>
<dbReference type="GO" id="GO:0008360">
    <property type="term" value="P:regulation of cell shape"/>
    <property type="evidence" value="ECO:0000315"/>
    <property type="project" value="UniProtKB"/>
</dbReference>
<dbReference type="GO" id="GO:0051056">
    <property type="term" value="P:regulation of small GTPase mediated signal transduction"/>
    <property type="evidence" value="ECO:0000315"/>
    <property type="project" value="UniProtKB"/>
</dbReference>
<dbReference type="GO" id="GO:0007264">
    <property type="term" value="P:small GTPase-mediated signal transduction"/>
    <property type="evidence" value="ECO:0000315"/>
    <property type="project" value="UniProtKB"/>
</dbReference>
<dbReference type="CDD" id="cd04391">
    <property type="entry name" value="RhoGAP_ARHGAP18"/>
    <property type="match status" value="1"/>
</dbReference>
<dbReference type="FunFam" id="1.10.555.10:FF:000028">
    <property type="entry name" value="rho GTPase-activating protein 18 isoform X1"/>
    <property type="match status" value="1"/>
</dbReference>
<dbReference type="Gene3D" id="1.10.555.10">
    <property type="entry name" value="Rho GTPase activation protein"/>
    <property type="match status" value="1"/>
</dbReference>
<dbReference type="InterPro" id="IPR008936">
    <property type="entry name" value="Rho_GTPase_activation_prot"/>
</dbReference>
<dbReference type="InterPro" id="IPR000198">
    <property type="entry name" value="RhoGAP_dom"/>
</dbReference>
<dbReference type="PANTHER" id="PTHR14963">
    <property type="entry name" value="RHO GTPASE ACTIVATING PROTEIN 18,19-RELATED"/>
    <property type="match status" value="1"/>
</dbReference>
<dbReference type="PANTHER" id="PTHR14963:SF6">
    <property type="entry name" value="RHO GTPASE-ACTIVATING PROTEIN 18"/>
    <property type="match status" value="1"/>
</dbReference>
<dbReference type="Pfam" id="PF00620">
    <property type="entry name" value="RhoGAP"/>
    <property type="match status" value="1"/>
</dbReference>
<dbReference type="Pfam" id="PF25442">
    <property type="entry name" value="Ubiquitin_RHG40_C"/>
    <property type="match status" value="1"/>
</dbReference>
<dbReference type="SMART" id="SM00324">
    <property type="entry name" value="RhoGAP"/>
    <property type="match status" value="1"/>
</dbReference>
<dbReference type="SUPFAM" id="SSF48350">
    <property type="entry name" value="GTPase activation domain, GAP"/>
    <property type="match status" value="1"/>
</dbReference>
<dbReference type="PROSITE" id="PS50238">
    <property type="entry name" value="RHOGAP"/>
    <property type="match status" value="1"/>
</dbReference>
<evidence type="ECO:0000250" key="1">
    <source>
        <dbReference type="UniProtKB" id="Q8K0Q5"/>
    </source>
</evidence>
<evidence type="ECO:0000255" key="2">
    <source>
        <dbReference type="PROSITE-ProRule" id="PRU00172"/>
    </source>
</evidence>
<evidence type="ECO:0000256" key="3">
    <source>
        <dbReference type="SAM" id="MobiDB-lite"/>
    </source>
</evidence>
<evidence type="ECO:0000269" key="4">
    <source>
    </source>
</evidence>
<evidence type="ECO:0000269" key="5">
    <source>
    </source>
</evidence>
<evidence type="ECO:0000269" key="6">
    <source>
    </source>
</evidence>
<evidence type="ECO:0000269" key="7">
    <source>
    </source>
</evidence>
<evidence type="ECO:0000269" key="8">
    <source>
    </source>
</evidence>
<evidence type="ECO:0000269" key="9">
    <source ref="3"/>
</evidence>
<evidence type="ECO:0000303" key="10">
    <source>
    </source>
</evidence>
<evidence type="ECO:0000303" key="11">
    <source>
    </source>
</evidence>
<evidence type="ECO:0000305" key="12"/>
<evidence type="ECO:0000312" key="13">
    <source>
        <dbReference type="EMBL" id="AAH39611.1"/>
    </source>
</evidence>
<evidence type="ECO:0000312" key="14">
    <source>
        <dbReference type="EMBL" id="AAI07417.1"/>
    </source>
</evidence>
<evidence type="ECO:0000312" key="15">
    <source>
        <dbReference type="HGNC" id="HGNC:21035"/>
    </source>
</evidence>
<evidence type="ECO:0007744" key="16">
    <source>
    </source>
</evidence>
<comment type="function">
    <text evidence="7 8">Rho GTPase activating protein that suppresses F-actin polymerization by inhibiting Rho. Rho GTPase activating proteins act by converting Rho-type GTPases to an inactive GDP-bound state (PubMed:21865595). Plays a key role in tissue tension and 3D tissue shape by regulating cortical actomyosin network formation. Acts downstream of YAP1 and inhibits actin polymerization, which in turn reduces nuclear localization of YAP1 (PubMed:25778702). Regulates cell shape, spreading, and migration (PubMed:21865595).</text>
</comment>
<comment type="subunit">
    <text evidence="4">Interacts with MPHOSPH6.</text>
</comment>
<comment type="subcellular location">
    <subcellularLocation>
        <location evidence="7">Cytoplasm</location>
    </subcellularLocation>
</comment>
<comment type="alternative products">
    <event type="alternative splicing"/>
    <isoform>
        <id>Q8N392-1</id>
        <name>1</name>
        <sequence type="displayed"/>
    </isoform>
    <isoform>
        <id>Q8N392-2</id>
        <name>2</name>
        <sequence type="described" ref="VSP_052092"/>
    </isoform>
</comment>
<comment type="sequence caution" evidence="12">
    <conflict type="miscellaneous discrepancy">
        <sequence resource="EMBL-CDS" id="AAH17223"/>
    </conflict>
    <text>Contaminating sequence. Potential poly-A sequence.</text>
</comment>
<comment type="sequence caution" evidence="12">
    <conflict type="miscellaneous discrepancy">
        <sequence resource="EMBL-CDS" id="AAH39611"/>
    </conflict>
    <text>Contaminating sequence. Potential poly-A sequence.</text>
</comment>
<comment type="sequence caution" evidence="12">
    <conflict type="miscellaneous discrepancy">
        <sequence resource="EMBL-CDS" id="AAH62417"/>
    </conflict>
    <text>Contaminating sequence. Potential poly-A sequence.</text>
</comment>
<comment type="sequence caution" evidence="12">
    <conflict type="erroneous initiation">
        <sequence resource="EMBL-CDS" id="BAB61887"/>
    </conflict>
    <text>Truncated N-terminus.</text>
</comment>
<gene>
    <name evidence="15" type="primary">ARHGAP18</name>
</gene>
<reference key="1">
    <citation type="journal article" date="2007" name="BMC Genomics">
        <title>The full-ORF clone resource of the German cDNA consortium.</title>
        <authorList>
            <person name="Bechtel S."/>
            <person name="Rosenfelder H."/>
            <person name="Duda A."/>
            <person name="Schmidt C.P."/>
            <person name="Ernst U."/>
            <person name="Wellenreuther R."/>
            <person name="Mehrle A."/>
            <person name="Schuster C."/>
            <person name="Bahr A."/>
            <person name="Bloecker H."/>
            <person name="Heubner D."/>
            <person name="Hoerlein A."/>
            <person name="Michel G."/>
            <person name="Wedler H."/>
            <person name="Koehrer K."/>
            <person name="Ottenwaelder B."/>
            <person name="Poustka A."/>
            <person name="Wiemann S."/>
            <person name="Schupp I."/>
        </authorList>
    </citation>
    <scope>NUCLEOTIDE SEQUENCE [LARGE SCALE MRNA] (ISOFORM 1)</scope>
    <scope>VARIANT ALA-23</scope>
    <source>
        <tissue>Melanoma</tissue>
    </source>
</reference>
<reference key="2">
    <citation type="journal article" date="2003" name="Nature">
        <title>The DNA sequence and analysis of human chromosome 6.</title>
        <authorList>
            <person name="Mungall A.J."/>
            <person name="Palmer S.A."/>
            <person name="Sims S.K."/>
            <person name="Edwards C.A."/>
            <person name="Ashurst J.L."/>
            <person name="Wilming L."/>
            <person name="Jones M.C."/>
            <person name="Horton R."/>
            <person name="Hunt S.E."/>
            <person name="Scott C.E."/>
            <person name="Gilbert J.G.R."/>
            <person name="Clamp M.E."/>
            <person name="Bethel G."/>
            <person name="Milne S."/>
            <person name="Ainscough R."/>
            <person name="Almeida J.P."/>
            <person name="Ambrose K.D."/>
            <person name="Andrews T.D."/>
            <person name="Ashwell R.I.S."/>
            <person name="Babbage A.K."/>
            <person name="Bagguley C.L."/>
            <person name="Bailey J."/>
            <person name="Banerjee R."/>
            <person name="Barker D.J."/>
            <person name="Barlow K.F."/>
            <person name="Bates K."/>
            <person name="Beare D.M."/>
            <person name="Beasley H."/>
            <person name="Beasley O."/>
            <person name="Bird C.P."/>
            <person name="Blakey S.E."/>
            <person name="Bray-Allen S."/>
            <person name="Brook J."/>
            <person name="Brown A.J."/>
            <person name="Brown J.Y."/>
            <person name="Burford D.C."/>
            <person name="Burrill W."/>
            <person name="Burton J."/>
            <person name="Carder C."/>
            <person name="Carter N.P."/>
            <person name="Chapman J.C."/>
            <person name="Clark S.Y."/>
            <person name="Clark G."/>
            <person name="Clee C.M."/>
            <person name="Clegg S."/>
            <person name="Cobley V."/>
            <person name="Collier R.E."/>
            <person name="Collins J.E."/>
            <person name="Colman L.K."/>
            <person name="Corby N.R."/>
            <person name="Coville G.J."/>
            <person name="Culley K.M."/>
            <person name="Dhami P."/>
            <person name="Davies J."/>
            <person name="Dunn M."/>
            <person name="Earthrowl M.E."/>
            <person name="Ellington A.E."/>
            <person name="Evans K.A."/>
            <person name="Faulkner L."/>
            <person name="Francis M.D."/>
            <person name="Frankish A."/>
            <person name="Frankland J."/>
            <person name="French L."/>
            <person name="Garner P."/>
            <person name="Garnett J."/>
            <person name="Ghori M.J."/>
            <person name="Gilby L.M."/>
            <person name="Gillson C.J."/>
            <person name="Glithero R.J."/>
            <person name="Grafham D.V."/>
            <person name="Grant M."/>
            <person name="Gribble S."/>
            <person name="Griffiths C."/>
            <person name="Griffiths M.N.D."/>
            <person name="Hall R."/>
            <person name="Halls K.S."/>
            <person name="Hammond S."/>
            <person name="Harley J.L."/>
            <person name="Hart E.A."/>
            <person name="Heath P.D."/>
            <person name="Heathcott R."/>
            <person name="Holmes S.J."/>
            <person name="Howden P.J."/>
            <person name="Howe K.L."/>
            <person name="Howell G.R."/>
            <person name="Huckle E."/>
            <person name="Humphray S.J."/>
            <person name="Humphries M.D."/>
            <person name="Hunt A.R."/>
            <person name="Johnson C.M."/>
            <person name="Joy A.A."/>
            <person name="Kay M."/>
            <person name="Keenan S.J."/>
            <person name="Kimberley A.M."/>
            <person name="King A."/>
            <person name="Laird G.K."/>
            <person name="Langford C."/>
            <person name="Lawlor S."/>
            <person name="Leongamornlert D.A."/>
            <person name="Leversha M."/>
            <person name="Lloyd C.R."/>
            <person name="Lloyd D.M."/>
            <person name="Loveland J.E."/>
            <person name="Lovell J."/>
            <person name="Martin S."/>
            <person name="Mashreghi-Mohammadi M."/>
            <person name="Maslen G.L."/>
            <person name="Matthews L."/>
            <person name="McCann O.T."/>
            <person name="McLaren S.J."/>
            <person name="McLay K."/>
            <person name="McMurray A."/>
            <person name="Moore M.J.F."/>
            <person name="Mullikin J.C."/>
            <person name="Niblett D."/>
            <person name="Nickerson T."/>
            <person name="Novik K.L."/>
            <person name="Oliver K."/>
            <person name="Overton-Larty E.K."/>
            <person name="Parker A."/>
            <person name="Patel R."/>
            <person name="Pearce A.V."/>
            <person name="Peck A.I."/>
            <person name="Phillimore B.J.C.T."/>
            <person name="Phillips S."/>
            <person name="Plumb R.W."/>
            <person name="Porter K.M."/>
            <person name="Ramsey Y."/>
            <person name="Ranby S.A."/>
            <person name="Rice C.M."/>
            <person name="Ross M.T."/>
            <person name="Searle S.M."/>
            <person name="Sehra H.K."/>
            <person name="Sheridan E."/>
            <person name="Skuce C.D."/>
            <person name="Smith S."/>
            <person name="Smith M."/>
            <person name="Spraggon L."/>
            <person name="Squares S.L."/>
            <person name="Steward C.A."/>
            <person name="Sycamore N."/>
            <person name="Tamlyn-Hall G."/>
            <person name="Tester J."/>
            <person name="Theaker A.J."/>
            <person name="Thomas D.W."/>
            <person name="Thorpe A."/>
            <person name="Tracey A."/>
            <person name="Tromans A."/>
            <person name="Tubby B."/>
            <person name="Wall M."/>
            <person name="Wallis J.M."/>
            <person name="West A.P."/>
            <person name="White S.S."/>
            <person name="Whitehead S.L."/>
            <person name="Whittaker H."/>
            <person name="Wild A."/>
            <person name="Willey D.J."/>
            <person name="Wilmer T.E."/>
            <person name="Wood J.M."/>
            <person name="Wray P.W."/>
            <person name="Wyatt J.C."/>
            <person name="Young L."/>
            <person name="Younger R.M."/>
            <person name="Bentley D.R."/>
            <person name="Coulson A."/>
            <person name="Durbin R.M."/>
            <person name="Hubbard T."/>
            <person name="Sulston J.E."/>
            <person name="Dunham I."/>
            <person name="Rogers J."/>
            <person name="Beck S."/>
        </authorList>
    </citation>
    <scope>NUCLEOTIDE SEQUENCE [LARGE SCALE GENOMIC DNA]</scope>
    <scope>ALTERNATIVE SPLICING (ISOFORM 2)</scope>
</reference>
<reference key="3">
    <citation type="submission" date="2005-09" db="EMBL/GenBank/DDBJ databases">
        <authorList>
            <person name="Mural R.J."/>
            <person name="Istrail S."/>
            <person name="Sutton G.G."/>
            <person name="Florea L."/>
            <person name="Halpern A.L."/>
            <person name="Mobarry C.M."/>
            <person name="Lippert R."/>
            <person name="Walenz B."/>
            <person name="Shatkay H."/>
            <person name="Dew I."/>
            <person name="Miller J.R."/>
            <person name="Flanigan M.J."/>
            <person name="Edwards N.J."/>
            <person name="Bolanos R."/>
            <person name="Fasulo D."/>
            <person name="Halldorsson B.V."/>
            <person name="Hannenhalli S."/>
            <person name="Turner R."/>
            <person name="Yooseph S."/>
            <person name="Lu F."/>
            <person name="Nusskern D.R."/>
            <person name="Shue B.C."/>
            <person name="Zheng X.H."/>
            <person name="Zhong F."/>
            <person name="Delcher A.L."/>
            <person name="Huson D.H."/>
            <person name="Kravitz S.A."/>
            <person name="Mouchard L."/>
            <person name="Reinert K."/>
            <person name="Remington K.A."/>
            <person name="Clark A.G."/>
            <person name="Waterman M.S."/>
            <person name="Eichler E.E."/>
            <person name="Adams M.D."/>
            <person name="Hunkapiller M.W."/>
            <person name="Myers E.W."/>
            <person name="Venter J.C."/>
        </authorList>
    </citation>
    <scope>NUCLEOTIDE SEQUENCE [LARGE SCALE GENOMIC DNA]</scope>
    <scope>VARIANT ALA-23</scope>
</reference>
<reference key="4">
    <citation type="journal article" date="2004" name="Genome Res.">
        <title>The status, quality, and expansion of the NIH full-length cDNA project: the Mammalian Gene Collection (MGC).</title>
        <authorList>
            <consortium name="The MGC Project Team"/>
        </authorList>
    </citation>
    <scope>NUCLEOTIDE SEQUENCE [LARGE SCALE MRNA] (ISOFORM 1)</scope>
    <scope>VARIANT ALA-23</scope>
    <source>
        <tissue evidence="14">Brain</tissue>
        <tissue evidence="13">Uterus</tissue>
    </source>
</reference>
<reference key="5">
    <citation type="submission" date="2001-07" db="EMBL/GenBank/DDBJ databases">
        <title>Molecular cloning and characterization of a novel GTPase activating Protein that regulated mast cell degranulation.</title>
        <authorList>
            <person name="Uchida T."/>
            <person name="Kuramasu A."/>
            <person name="Okumura K."/>
            <person name="Nakao A."/>
            <person name="Ogawa H."/>
            <person name="Ra C."/>
        </authorList>
    </citation>
    <scope>NUCLEOTIDE SEQUENCE [MRNA] OF 39-663 (ISOFORM 1)</scope>
    <source>
        <tissue>Mast cell</tissue>
    </source>
</reference>
<reference key="6">
    <citation type="journal article" date="2004" name="Genome Res.">
        <title>A protein interaction framework for human mRNA degradation.</title>
        <authorList>
            <person name="Lehner B."/>
            <person name="Sanderson C.M."/>
        </authorList>
    </citation>
    <scope>INTERACTION WITH MPHOSPH6</scope>
</reference>
<reference key="7">
    <citation type="journal article" date="2011" name="BMC Syst. Biol.">
        <title>Initial characterization of the human central proteome.</title>
        <authorList>
            <person name="Burkard T.R."/>
            <person name="Planyavsky M."/>
            <person name="Kaupe I."/>
            <person name="Breitwieser F.P."/>
            <person name="Buerckstuemmer T."/>
            <person name="Bennett K.L."/>
            <person name="Superti-Furga G."/>
            <person name="Colinge J."/>
        </authorList>
    </citation>
    <scope>IDENTIFICATION BY MASS SPECTROMETRY [LARGE SCALE ANALYSIS]</scope>
</reference>
<reference key="8">
    <citation type="journal article" date="2011" name="Mol. Biol. Cell">
        <title>ARHGAP18, a GTPase-activating protein for RhoA, controls cell shape, spreading, and motility.</title>
        <authorList>
            <person name="Maeda M."/>
            <person name="Hasegawa H."/>
            <person name="Hyodo T."/>
            <person name="Ito S."/>
            <person name="Asano E."/>
            <person name="Yuang H."/>
            <person name="Funasaka K."/>
            <person name="Shimokata K."/>
            <person name="Hasegawa Y."/>
            <person name="Hamaguchi M."/>
            <person name="Senga T."/>
        </authorList>
    </citation>
    <scope>FUNCTION</scope>
    <scope>SUBCELLULAR LOCATION</scope>
    <scope>MUTAGENESIS OF ARG-365</scope>
</reference>
<reference key="9">
    <citation type="journal article" date="2013" name="J. Proteome Res.">
        <title>Toward a comprehensive characterization of a human cancer cell phosphoproteome.</title>
        <authorList>
            <person name="Zhou H."/>
            <person name="Di Palma S."/>
            <person name="Preisinger C."/>
            <person name="Peng M."/>
            <person name="Polat A.N."/>
            <person name="Heck A.J."/>
            <person name="Mohammed S."/>
        </authorList>
    </citation>
    <scope>PHOSPHORYLATION [LARGE SCALE ANALYSIS] AT THR-158; SER-263 AND SER-610</scope>
    <scope>IDENTIFICATION BY MASS SPECTROMETRY [LARGE SCALE ANALYSIS]</scope>
    <source>
        <tissue>Cervix carcinoma</tissue>
        <tissue>Erythroleukemia</tissue>
    </source>
</reference>
<reference key="10">
    <citation type="journal article" date="2014" name="J. Proteomics">
        <title>An enzyme assisted RP-RPLC approach for in-depth analysis of human liver phosphoproteome.</title>
        <authorList>
            <person name="Bian Y."/>
            <person name="Song C."/>
            <person name="Cheng K."/>
            <person name="Dong M."/>
            <person name="Wang F."/>
            <person name="Huang J."/>
            <person name="Sun D."/>
            <person name="Wang L."/>
            <person name="Ye M."/>
            <person name="Zou H."/>
        </authorList>
    </citation>
    <scope>IDENTIFICATION BY MASS SPECTROMETRY [LARGE SCALE ANALYSIS]</scope>
    <source>
        <tissue>Liver</tissue>
    </source>
</reference>
<reference key="11">
    <citation type="journal article" date="2015" name="Nature">
        <title>YAP is essential for tissue tension to ensure vertebrate 3D body shape.</title>
        <authorList>
            <person name="Porazinski S."/>
            <person name="Wang H."/>
            <person name="Asaoka Y."/>
            <person name="Behrndt M."/>
            <person name="Miyamoto T."/>
            <person name="Morita H."/>
            <person name="Hata S."/>
            <person name="Sasaki T."/>
            <person name="Krens S.F."/>
            <person name="Osada Y."/>
            <person name="Asaka S."/>
            <person name="Momoi A."/>
            <person name="Linton S."/>
            <person name="Miesfeld J.B."/>
            <person name="Link B.A."/>
            <person name="Senga T."/>
            <person name="Castillo-Morales A."/>
            <person name="Urrutia A.O."/>
            <person name="Shimizu N."/>
            <person name="Nagase H."/>
            <person name="Matsuura S."/>
            <person name="Bagby S."/>
            <person name="Kondoh H."/>
            <person name="Nishina H."/>
            <person name="Heisenberg C.P."/>
            <person name="Furutani-Seiki M."/>
        </authorList>
    </citation>
    <scope>FUNCTION</scope>
</reference>
<organism>
    <name type="scientific">Homo sapiens</name>
    <name type="common">Human</name>
    <dbReference type="NCBI Taxonomy" id="9606"/>
    <lineage>
        <taxon>Eukaryota</taxon>
        <taxon>Metazoa</taxon>
        <taxon>Chordata</taxon>
        <taxon>Craniata</taxon>
        <taxon>Vertebrata</taxon>
        <taxon>Euteleostomi</taxon>
        <taxon>Mammalia</taxon>
        <taxon>Eutheria</taxon>
        <taxon>Euarchontoglires</taxon>
        <taxon>Primates</taxon>
        <taxon>Haplorrhini</taxon>
        <taxon>Catarrhini</taxon>
        <taxon>Hominidae</taxon>
        <taxon>Homo</taxon>
    </lineage>
</organism>
<feature type="chain" id="PRO_0000245789" description="Rho GTPase-activating protein 18">
    <location>
        <begin position="1"/>
        <end position="663"/>
    </location>
</feature>
<feature type="domain" description="Rho-GAP" evidence="2">
    <location>
        <begin position="324"/>
        <end position="523"/>
    </location>
</feature>
<feature type="region of interest" description="Disordered" evidence="3">
    <location>
        <begin position="15"/>
        <end position="37"/>
    </location>
</feature>
<feature type="region of interest" description="Disordered" evidence="3">
    <location>
        <begin position="179"/>
        <end position="227"/>
    </location>
</feature>
<feature type="region of interest" description="Disordered" evidence="3">
    <location>
        <begin position="243"/>
        <end position="277"/>
    </location>
</feature>
<feature type="compositionally biased region" description="Basic and acidic residues" evidence="3">
    <location>
        <begin position="197"/>
        <end position="219"/>
    </location>
</feature>
<feature type="compositionally biased region" description="Basic and acidic residues" evidence="3">
    <location>
        <begin position="245"/>
        <end position="258"/>
    </location>
</feature>
<feature type="site" description="Arginine finger; crucial for GTP hydrolysis by stabilizing the transition state" evidence="2">
    <location>
        <position position="365"/>
    </location>
</feature>
<feature type="modified residue" description="Phosphoserine" evidence="1">
    <location>
        <position position="66"/>
    </location>
</feature>
<feature type="modified residue" description="Phosphoserine" evidence="1">
    <location>
        <position position="69"/>
    </location>
</feature>
<feature type="modified residue" description="Phosphothreonine" evidence="16">
    <location>
        <position position="158"/>
    </location>
</feature>
<feature type="modified residue" description="Phosphoserine" evidence="16">
    <location>
        <position position="263"/>
    </location>
</feature>
<feature type="modified residue" description="Phosphoserine" evidence="16">
    <location>
        <position position="610"/>
    </location>
</feature>
<feature type="splice variant" id="VSP_052092" description="In isoform 2." evidence="10">
    <location>
        <begin position="1"/>
        <end position="45"/>
    </location>
</feature>
<feature type="sequence variant" id="VAR_060460" description="In dbSNP:rs3752536." evidence="5 6 9">
    <original>T</original>
    <variation>A</variation>
    <location>
        <position position="23"/>
    </location>
</feature>
<feature type="sequence variant" id="VAR_060461" description="In dbSNP:rs11544371.">
    <original>N</original>
    <variation>S</variation>
    <location>
        <position position="91"/>
    </location>
</feature>
<feature type="sequence variant" id="VAR_060462" description="In dbSNP:rs11544372.">
    <original>Q</original>
    <variation>H</variation>
    <location>
        <position position="165"/>
    </location>
</feature>
<feature type="mutagenesis site" description="Abolishes GTPase activation activity." evidence="7">
    <original>R</original>
    <variation>A</variation>
    <location>
        <position position="365"/>
    </location>
</feature>
<feature type="sequence conflict" description="In Ref. 4; AAH17223." evidence="12" ref="4">
    <original>K</original>
    <variation>E</variation>
    <location>
        <position position="307"/>
    </location>
</feature>
<feature type="sequence conflict" description="In Ref. 4; AAH62417." evidence="12" ref="4">
    <original>N</original>
    <variation>K</variation>
    <location>
        <position position="467"/>
    </location>
</feature>